<accession>Q1WRF9</accession>
<reference key="1">
    <citation type="journal article" date="2006" name="Proc. Natl. Acad. Sci. U.S.A.">
        <title>Multireplicon genome architecture of Lactobacillus salivarius.</title>
        <authorList>
            <person name="Claesson M.J."/>
            <person name="Li Y."/>
            <person name="Leahy S."/>
            <person name="Canchaya C."/>
            <person name="van Pijkeren J.P."/>
            <person name="Cerdeno-Tarraga A.M."/>
            <person name="Parkhill J."/>
            <person name="Flynn S."/>
            <person name="O'Sullivan G.C."/>
            <person name="Collins J.K."/>
            <person name="Higgins D."/>
            <person name="Shanahan F."/>
            <person name="Fitzgerald G.F."/>
            <person name="van Sinderen D."/>
            <person name="O'Toole P.W."/>
        </authorList>
    </citation>
    <scope>NUCLEOTIDE SEQUENCE [LARGE SCALE GENOMIC DNA]</scope>
    <source>
        <strain>UCC118</strain>
    </source>
</reference>
<feature type="chain" id="PRO_1000021421" description="Ribonuclease P protein component">
    <location>
        <begin position="1"/>
        <end position="113"/>
    </location>
</feature>
<keyword id="KW-0255">Endonuclease</keyword>
<keyword id="KW-0378">Hydrolase</keyword>
<keyword id="KW-0540">Nuclease</keyword>
<keyword id="KW-1185">Reference proteome</keyword>
<keyword id="KW-0694">RNA-binding</keyword>
<keyword id="KW-0819">tRNA processing</keyword>
<proteinExistence type="inferred from homology"/>
<name>RNPA_LIGS1</name>
<gene>
    <name evidence="1" type="primary">rnpA</name>
    <name type="ordered locus">LSL_1737</name>
</gene>
<sequence length="113" mass="13134">MRKSYRVKKEAEFQTVFTQGQSCANRQFVVYMLEKPDQKHFRVGISVGKKIGNAVARNWVKRRIRQSLTELKPQLKQDCDFLVIARPTVAYMSMAEVKEHLKHVLKLAKVLGE</sequence>
<organism>
    <name type="scientific">Ligilactobacillus salivarius (strain UCC118)</name>
    <name type="common">Lactobacillus salivarius</name>
    <dbReference type="NCBI Taxonomy" id="362948"/>
    <lineage>
        <taxon>Bacteria</taxon>
        <taxon>Bacillati</taxon>
        <taxon>Bacillota</taxon>
        <taxon>Bacilli</taxon>
        <taxon>Lactobacillales</taxon>
        <taxon>Lactobacillaceae</taxon>
        <taxon>Ligilactobacillus</taxon>
    </lineage>
</organism>
<dbReference type="EC" id="3.1.26.5" evidence="1"/>
<dbReference type="EMBL" id="CP000233">
    <property type="protein sequence ID" value="ABE00539.1"/>
    <property type="molecule type" value="Genomic_DNA"/>
</dbReference>
<dbReference type="RefSeq" id="WP_003701410.1">
    <property type="nucleotide sequence ID" value="NC_007929.1"/>
</dbReference>
<dbReference type="RefSeq" id="YP_536622.1">
    <property type="nucleotide sequence ID" value="NC_007929.1"/>
</dbReference>
<dbReference type="SMR" id="Q1WRF9"/>
<dbReference type="STRING" id="362948.LSL_1737"/>
<dbReference type="GeneID" id="89466488"/>
<dbReference type="KEGG" id="lsl:LSL_1737"/>
<dbReference type="PATRIC" id="fig|362948.14.peg.1835"/>
<dbReference type="HOGENOM" id="CLU_117179_9_1_9"/>
<dbReference type="OrthoDB" id="9810867at2"/>
<dbReference type="Proteomes" id="UP000006559">
    <property type="component" value="Chromosome"/>
</dbReference>
<dbReference type="GO" id="GO:0030677">
    <property type="term" value="C:ribonuclease P complex"/>
    <property type="evidence" value="ECO:0007669"/>
    <property type="project" value="TreeGrafter"/>
</dbReference>
<dbReference type="GO" id="GO:0042781">
    <property type="term" value="F:3'-tRNA processing endoribonuclease activity"/>
    <property type="evidence" value="ECO:0007669"/>
    <property type="project" value="TreeGrafter"/>
</dbReference>
<dbReference type="GO" id="GO:0004526">
    <property type="term" value="F:ribonuclease P activity"/>
    <property type="evidence" value="ECO:0007669"/>
    <property type="project" value="UniProtKB-UniRule"/>
</dbReference>
<dbReference type="GO" id="GO:0000049">
    <property type="term" value="F:tRNA binding"/>
    <property type="evidence" value="ECO:0007669"/>
    <property type="project" value="UniProtKB-UniRule"/>
</dbReference>
<dbReference type="GO" id="GO:0001682">
    <property type="term" value="P:tRNA 5'-leader removal"/>
    <property type="evidence" value="ECO:0007669"/>
    <property type="project" value="UniProtKB-UniRule"/>
</dbReference>
<dbReference type="FunFam" id="3.30.230.10:FF:000021">
    <property type="entry name" value="Ribonuclease P protein component"/>
    <property type="match status" value="1"/>
</dbReference>
<dbReference type="Gene3D" id="3.30.230.10">
    <property type="match status" value="1"/>
</dbReference>
<dbReference type="HAMAP" id="MF_00227">
    <property type="entry name" value="RNase_P"/>
    <property type="match status" value="1"/>
</dbReference>
<dbReference type="InterPro" id="IPR020568">
    <property type="entry name" value="Ribosomal_Su5_D2-typ_SF"/>
</dbReference>
<dbReference type="InterPro" id="IPR014721">
    <property type="entry name" value="Ribsml_uS5_D2-typ_fold_subgr"/>
</dbReference>
<dbReference type="InterPro" id="IPR000100">
    <property type="entry name" value="RNase_P"/>
</dbReference>
<dbReference type="NCBIfam" id="TIGR00188">
    <property type="entry name" value="rnpA"/>
    <property type="match status" value="1"/>
</dbReference>
<dbReference type="PANTHER" id="PTHR33992">
    <property type="entry name" value="RIBONUCLEASE P PROTEIN COMPONENT"/>
    <property type="match status" value="1"/>
</dbReference>
<dbReference type="PANTHER" id="PTHR33992:SF1">
    <property type="entry name" value="RIBONUCLEASE P PROTEIN COMPONENT"/>
    <property type="match status" value="1"/>
</dbReference>
<dbReference type="Pfam" id="PF00825">
    <property type="entry name" value="Ribonuclease_P"/>
    <property type="match status" value="1"/>
</dbReference>
<dbReference type="SUPFAM" id="SSF54211">
    <property type="entry name" value="Ribosomal protein S5 domain 2-like"/>
    <property type="match status" value="1"/>
</dbReference>
<comment type="function">
    <text evidence="1">RNaseP catalyzes the removal of the 5'-leader sequence from pre-tRNA to produce the mature 5'-terminus. It can also cleave other RNA substrates such as 4.5S RNA. The protein component plays an auxiliary but essential role in vivo by binding to the 5'-leader sequence and broadening the substrate specificity of the ribozyme.</text>
</comment>
<comment type="catalytic activity">
    <reaction evidence="1">
        <text>Endonucleolytic cleavage of RNA, removing 5'-extranucleotides from tRNA precursor.</text>
        <dbReference type="EC" id="3.1.26.5"/>
    </reaction>
</comment>
<comment type="subunit">
    <text evidence="1">Consists of a catalytic RNA component (M1 or rnpB) and a protein subunit.</text>
</comment>
<comment type="similarity">
    <text evidence="1">Belongs to the RnpA family.</text>
</comment>
<protein>
    <recommendedName>
        <fullName evidence="1">Ribonuclease P protein component</fullName>
        <shortName evidence="1">RNase P protein</shortName>
        <shortName evidence="1">RNaseP protein</shortName>
        <ecNumber evidence="1">3.1.26.5</ecNumber>
    </recommendedName>
    <alternativeName>
        <fullName evidence="1">Protein C5</fullName>
    </alternativeName>
</protein>
<evidence type="ECO:0000255" key="1">
    <source>
        <dbReference type="HAMAP-Rule" id="MF_00227"/>
    </source>
</evidence>